<proteinExistence type="evidence at protein level"/>
<sequence length="477" mass="51798">MRFSRFIIGLTSCIAFSVQAANVDEYITQLPAGANLALMVQKVGASAPAIDYHSQQMALPASTQKVITALAALIQLGPDFRFTTTLETKGNVENGVLKGDLVARFGADPTLKRQDIRNMVATLKKSGVNQIDGNVLIDTSIFASHDKAPGWPWNDMTQCFSAPPAAAIVDRNCFSVSLYSAPKPGDMAFIRVASYYPVTMFSQVRTLPRGSAEAQYCELDVVPGDLNRFTLTGCLPQRSEPLPLAFAVQDGASYAGAILKDELKQAGITWSGTLLRQTQVNEPGTVVASKQSAPLHDLLKIMLKKSDNMIADTVFRMIGHARFNVPGTWRAGSDAVRQILRQQAGVDIGNTIIADGSGLSRHNLIAPATMMQVLQYIAQHDNELNFISMLPLAGYDGSLQYRAGLHQAGVDGKVSAKTGSLQGVYNLAGFITTASGQRMAFVQYLSGYAVEPADQRNRRIPLVRFESRLYKDIYQNN</sequence>
<organism>
    <name type="scientific">Escherichia coli (strain K12)</name>
    <dbReference type="NCBI Taxonomy" id="83333"/>
    <lineage>
        <taxon>Bacteria</taxon>
        <taxon>Pseudomonadati</taxon>
        <taxon>Pseudomonadota</taxon>
        <taxon>Gammaproteobacteria</taxon>
        <taxon>Enterobacterales</taxon>
        <taxon>Enterobacteriaceae</taxon>
        <taxon>Escherichia</taxon>
    </lineage>
</organism>
<protein>
    <recommendedName>
        <fullName>D-alanyl-D-alanine carboxypeptidase DacB</fullName>
        <shortName>DD-carboxypeptidase</shortName>
        <shortName>DD-peptidase</shortName>
        <ecNumber>3.4.16.4</ecNumber>
    </recommendedName>
    <alternativeName>
        <fullName>D-alanyl-D-alanine endopeptidase</fullName>
        <shortName>DD-endopeptidase</shortName>
        <ecNumber>3.4.21.-</ecNumber>
    </alternativeName>
    <alternativeName>
        <fullName>Penicillin-binding protein 4</fullName>
        <shortName>PBP-4</shortName>
    </alternativeName>
</protein>
<gene>
    <name type="primary">dacB</name>
    <name type="ordered locus">b3182</name>
    <name type="ordered locus">JW3149</name>
</gene>
<reference key="1">
    <citation type="journal article" date="1991" name="FEMS Microbiol. Lett.">
        <title>Penicillin-binding protein 4 of Escherichia coli shows a novel type of primary structure among penicillin-interacting proteins.</title>
        <authorList>
            <person name="Mottl H."/>
            <person name="Terpstra P."/>
            <person name="Keck W."/>
        </authorList>
    </citation>
    <scope>NUCLEOTIDE SEQUENCE [GENOMIC DNA]</scope>
    <scope>PROTEIN SEQUENCE OF 21-31</scope>
    <source>
        <strain>K12 / W3110 / ATCC 27325 / DSM 5911</strain>
    </source>
</reference>
<reference key="2">
    <citation type="submission" date="1993-09" db="EMBL/GenBank/DDBJ databases">
        <authorList>
            <person name="Wang R."/>
            <person name="Kushner S.R."/>
        </authorList>
    </citation>
    <scope>NUCLEOTIDE SEQUENCE [GENOMIC DNA]</scope>
    <source>
        <strain>K12</strain>
    </source>
</reference>
<reference key="3">
    <citation type="journal article" date="1997" name="Science">
        <title>The complete genome sequence of Escherichia coli K-12.</title>
        <authorList>
            <person name="Blattner F.R."/>
            <person name="Plunkett G. III"/>
            <person name="Bloch C.A."/>
            <person name="Perna N.T."/>
            <person name="Burland V."/>
            <person name="Riley M."/>
            <person name="Collado-Vides J."/>
            <person name="Glasner J.D."/>
            <person name="Rode C.K."/>
            <person name="Mayhew G.F."/>
            <person name="Gregor J."/>
            <person name="Davis N.W."/>
            <person name="Kirkpatrick H.A."/>
            <person name="Goeden M.A."/>
            <person name="Rose D.J."/>
            <person name="Mau B."/>
            <person name="Shao Y."/>
        </authorList>
    </citation>
    <scope>NUCLEOTIDE SEQUENCE [LARGE SCALE GENOMIC DNA]</scope>
    <source>
        <strain>K12 / MG1655 / ATCC 47076</strain>
    </source>
</reference>
<reference key="4">
    <citation type="journal article" date="2006" name="Mol. Syst. Biol.">
        <title>Highly accurate genome sequences of Escherichia coli K-12 strains MG1655 and W3110.</title>
        <authorList>
            <person name="Hayashi K."/>
            <person name="Morooka N."/>
            <person name="Yamamoto Y."/>
            <person name="Fujita K."/>
            <person name="Isono K."/>
            <person name="Choi S."/>
            <person name="Ohtsubo E."/>
            <person name="Baba T."/>
            <person name="Wanner B.L."/>
            <person name="Mori H."/>
            <person name="Horiuchi T."/>
        </authorList>
    </citation>
    <scope>NUCLEOTIDE SEQUENCE [LARGE SCALE GENOMIC DNA]</scope>
    <source>
        <strain>K12 / W3110 / ATCC 27325 / DSM 5911</strain>
    </source>
</reference>
<reference key="5">
    <citation type="journal article" date="2006" name="Biochemistry">
        <title>Crystal structure of penicillin binding protein 4 (dacB) from Escherichia coli, both in the native form and covalently linked to various antibiotics.</title>
        <authorList>
            <person name="Kishida H."/>
            <person name="Unzai S."/>
            <person name="Roper D.I."/>
            <person name="Lloyd A."/>
            <person name="Park S.-Y."/>
            <person name="Tame J.R.H."/>
        </authorList>
    </citation>
    <scope>PARTIAL NUCLEOTIDE SEQUENCE [GENOMIC DNA]</scope>
    <scope>X-RAY CRYSTALLOGRAPHY (1.55 ANGSTROMS) OF 21-477 OF APOENZYME AND IN COMPLEX WITH PENICILLIN ANTIBIOTICS</scope>
    <source>
        <strain>K12</strain>
    </source>
</reference>
<reference key="6">
    <citation type="journal article" date="1991" name="Mol. Microbiol.">
        <title>Penicillin-binding protein 4 of Escherichia coli: molecular cloning of the dacB gene, controlled overexpression, and alterations in murein composition.</title>
        <authorList>
            <person name="Korat B."/>
            <person name="Mottl H."/>
            <person name="Keck W."/>
        </authorList>
    </citation>
    <scope>FUNCTION</scope>
</reference>
<keyword id="KW-0002">3D-structure</keyword>
<keyword id="KW-0046">Antibiotic resistance</keyword>
<keyword id="KW-0131">Cell cycle</keyword>
<keyword id="KW-0132">Cell division</keyword>
<keyword id="KW-0133">Cell shape</keyword>
<keyword id="KW-0961">Cell wall biogenesis/degradation</keyword>
<keyword id="KW-0903">Direct protein sequencing</keyword>
<keyword id="KW-0378">Hydrolase</keyword>
<keyword id="KW-0573">Peptidoglycan synthesis</keyword>
<keyword id="KW-0574">Periplasm</keyword>
<keyword id="KW-1185">Reference proteome</keyword>
<keyword id="KW-0732">Signal</keyword>
<comment type="function">
    <text evidence="4">Not involved in transpeptidation but exclusively catalyzes a DD-carboxypeptidase and DD-endopeptidase reaction.</text>
</comment>
<comment type="catalytic activity">
    <reaction>
        <text>Preferential cleavage: (Ac)2-L-Lys-D-Ala-|-D-Ala. Also transpeptidation of peptidyl-alanyl moieties that are N-acyl substituents of D-alanine.</text>
        <dbReference type="EC" id="3.4.16.4"/>
    </reaction>
</comment>
<comment type="pathway">
    <text>Cell wall biogenesis; peptidoglycan biosynthesis.</text>
</comment>
<comment type="interaction">
    <interactant intactId="EBI-1131834">
        <id>P24228</id>
    </interactant>
    <interactant intactId="EBI-1120296">
        <id>P0A6E4</id>
        <label>argG</label>
    </interactant>
    <organismsDiffer>false</organismsDiffer>
    <experiments>2</experiments>
</comment>
<comment type="subcellular location">
    <subcellularLocation>
        <location evidence="5">Periplasm</location>
    </subcellularLocation>
</comment>
<comment type="miscellaneous">
    <text>In E.coli there are three murein endopeptidases: two are penicillin sensitive (DacB and PbpG), the other (MepA) not.</text>
</comment>
<comment type="similarity">
    <text evidence="5">Belongs to the peptidase S13 family.</text>
</comment>
<feature type="signal peptide" evidence="3">
    <location>
        <begin position="1"/>
        <end position="20"/>
    </location>
</feature>
<feature type="chain" id="PRO_0000027241" description="D-alanyl-D-alanine carboxypeptidase DacB">
    <location>
        <begin position="21"/>
        <end position="477"/>
    </location>
</feature>
<feature type="region of interest" description="Absent in class-A beta-lactamases">
    <location>
        <begin position="90"/>
        <end position="263"/>
    </location>
</feature>
<feature type="active site" description="Acyl-ester intermediate" evidence="2">
    <location>
        <position position="62"/>
    </location>
</feature>
<feature type="active site" description="Proton acceptor" evidence="2">
    <location>
        <position position="65"/>
    </location>
</feature>
<feature type="active site" evidence="2">
    <location>
        <position position="306"/>
    </location>
</feature>
<feature type="binding site" evidence="1">
    <location>
        <position position="417"/>
    </location>
    <ligand>
        <name>substrate</name>
    </ligand>
</feature>
<feature type="sequence conflict" description="In Ref. 5." evidence="5" ref="5">
    <original>D</original>
    <variation>Y</variation>
    <location>
        <position position="261"/>
    </location>
</feature>
<feature type="sequence conflict" description="In Ref. 1; CAA42643." evidence="5" ref="1">
    <original>L</original>
    <variation>Q</variation>
    <location>
        <position position="427"/>
    </location>
</feature>
<feature type="helix" evidence="6">
    <location>
        <begin position="23"/>
        <end position="27"/>
    </location>
</feature>
<feature type="strand" evidence="6">
    <location>
        <begin position="35"/>
        <end position="42"/>
    </location>
</feature>
<feature type="strand" evidence="6">
    <location>
        <begin position="49"/>
        <end position="53"/>
    </location>
</feature>
<feature type="helix" evidence="6">
    <location>
        <begin position="61"/>
        <end position="63"/>
    </location>
</feature>
<feature type="helix" evidence="6">
    <location>
        <begin position="64"/>
        <end position="75"/>
    </location>
</feature>
<feature type="strand" evidence="6">
    <location>
        <begin position="83"/>
        <end position="93"/>
    </location>
</feature>
<feature type="strand" evidence="6">
    <location>
        <begin position="96"/>
        <end position="104"/>
    </location>
</feature>
<feature type="helix" evidence="6">
    <location>
        <begin position="113"/>
        <end position="125"/>
    </location>
</feature>
<feature type="strand" evidence="6">
    <location>
        <begin position="130"/>
        <end position="133"/>
    </location>
</feature>
<feature type="strand" evidence="6">
    <location>
        <begin position="135"/>
        <end position="138"/>
    </location>
</feature>
<feature type="helix" evidence="6">
    <location>
        <begin position="153"/>
        <end position="155"/>
    </location>
</feature>
<feature type="helix" evidence="6">
    <location>
        <begin position="159"/>
        <end position="161"/>
    </location>
</feature>
<feature type="helix" evidence="6">
    <location>
        <begin position="170"/>
        <end position="172"/>
    </location>
</feature>
<feature type="strand" evidence="6">
    <location>
        <begin position="173"/>
        <end position="179"/>
    </location>
</feature>
<feature type="strand" evidence="6">
    <location>
        <begin position="189"/>
        <end position="191"/>
    </location>
</feature>
<feature type="strand" evidence="6">
    <location>
        <begin position="199"/>
        <end position="207"/>
    </location>
</feature>
<feature type="strand" evidence="8">
    <location>
        <begin position="209"/>
        <end position="211"/>
    </location>
</feature>
<feature type="turn" evidence="6">
    <location>
        <begin position="213"/>
        <end position="216"/>
    </location>
</feature>
<feature type="strand" evidence="6">
    <location>
        <begin position="219"/>
        <end position="224"/>
    </location>
</feature>
<feature type="helix" evidence="6">
    <location>
        <begin position="225"/>
        <end position="227"/>
    </location>
</feature>
<feature type="strand" evidence="6">
    <location>
        <begin position="228"/>
        <end position="236"/>
    </location>
</feature>
<feature type="strand" evidence="6">
    <location>
        <begin position="242"/>
        <end position="247"/>
    </location>
</feature>
<feature type="helix" evidence="6">
    <location>
        <begin position="251"/>
        <end position="265"/>
    </location>
</feature>
<feature type="strand" evidence="6">
    <location>
        <begin position="269"/>
        <end position="272"/>
    </location>
</feature>
<feature type="strand" evidence="6">
    <location>
        <begin position="274"/>
        <end position="277"/>
    </location>
</feature>
<feature type="strand" evidence="6">
    <location>
        <begin position="285"/>
        <end position="291"/>
    </location>
</feature>
<feature type="helix" evidence="6">
    <location>
        <begin position="295"/>
        <end position="305"/>
    </location>
</feature>
<feature type="helix" evidence="6">
    <location>
        <begin position="308"/>
        <end position="323"/>
    </location>
</feature>
<feature type="helix" evidence="6">
    <location>
        <begin position="329"/>
        <end position="342"/>
    </location>
</feature>
<feature type="strand" evidence="6">
    <location>
        <begin position="356"/>
        <end position="358"/>
    </location>
</feature>
<feature type="helix" evidence="6">
    <location>
        <begin position="367"/>
        <end position="379"/>
    </location>
</feature>
<feature type="helix" evidence="6">
    <location>
        <begin position="381"/>
        <end position="384"/>
    </location>
</feature>
<feature type="helix" evidence="6">
    <location>
        <begin position="387"/>
        <end position="389"/>
    </location>
</feature>
<feature type="turn" evidence="6">
    <location>
        <begin position="393"/>
        <end position="395"/>
    </location>
</feature>
<feature type="helix" evidence="6">
    <location>
        <begin position="397"/>
        <end position="399"/>
    </location>
</feature>
<feature type="helix" evidence="6">
    <location>
        <begin position="403"/>
        <end position="407"/>
    </location>
</feature>
<feature type="turn" evidence="6">
    <location>
        <begin position="411"/>
        <end position="413"/>
    </location>
</feature>
<feature type="strand" evidence="6">
    <location>
        <begin position="414"/>
        <end position="421"/>
    </location>
</feature>
<feature type="strand" evidence="6">
    <location>
        <begin position="424"/>
        <end position="432"/>
    </location>
</feature>
<feature type="strand" evidence="6">
    <location>
        <begin position="438"/>
        <end position="447"/>
    </location>
</feature>
<feature type="helix" evidence="6">
    <location>
        <begin position="452"/>
        <end position="454"/>
    </location>
</feature>
<feature type="turn" evidence="7">
    <location>
        <begin position="455"/>
        <end position="457"/>
    </location>
</feature>
<feature type="helix" evidence="6">
    <location>
        <begin position="460"/>
        <end position="475"/>
    </location>
</feature>
<evidence type="ECO:0000250" key="1"/>
<evidence type="ECO:0000250" key="2">
    <source>
        <dbReference type="UniProtKB" id="P39844"/>
    </source>
</evidence>
<evidence type="ECO:0000269" key="3">
    <source>
    </source>
</evidence>
<evidence type="ECO:0000269" key="4">
    <source>
    </source>
</evidence>
<evidence type="ECO:0000305" key="5"/>
<evidence type="ECO:0007829" key="6">
    <source>
        <dbReference type="PDB" id="2EX2"/>
    </source>
</evidence>
<evidence type="ECO:0007829" key="7">
    <source>
        <dbReference type="PDB" id="2EX6"/>
    </source>
</evidence>
<evidence type="ECO:0007829" key="8">
    <source>
        <dbReference type="PDB" id="2EX9"/>
    </source>
</evidence>
<name>DACB_ECOLI</name>
<dbReference type="EC" id="3.4.16.4"/>
<dbReference type="EC" id="3.4.21.-"/>
<dbReference type="EMBL" id="X59460">
    <property type="protein sequence ID" value="CAA42070.1"/>
    <property type="molecule type" value="Genomic_DNA"/>
</dbReference>
<dbReference type="EMBL" id="X60038">
    <property type="protein sequence ID" value="CAA42643.1"/>
    <property type="molecule type" value="Genomic_DNA"/>
</dbReference>
<dbReference type="EMBL" id="U01376">
    <property type="protein sequence ID" value="AAA97505.1"/>
    <property type="molecule type" value="Genomic_DNA"/>
</dbReference>
<dbReference type="EMBL" id="U18997">
    <property type="protein sequence ID" value="AAA57983.1"/>
    <property type="molecule type" value="Genomic_DNA"/>
</dbReference>
<dbReference type="EMBL" id="U00096">
    <property type="protein sequence ID" value="AAC76214.1"/>
    <property type="molecule type" value="Genomic_DNA"/>
</dbReference>
<dbReference type="EMBL" id="AP009048">
    <property type="protein sequence ID" value="BAE77226.1"/>
    <property type="molecule type" value="Genomic_DNA"/>
</dbReference>
<dbReference type="PIR" id="A54535">
    <property type="entry name" value="A54535"/>
</dbReference>
<dbReference type="RefSeq" id="NP_417649.1">
    <property type="nucleotide sequence ID" value="NC_000913.3"/>
</dbReference>
<dbReference type="RefSeq" id="WP_001212619.1">
    <property type="nucleotide sequence ID" value="NZ_SSZK01000007.1"/>
</dbReference>
<dbReference type="PDB" id="2EX2">
    <property type="method" value="X-ray"/>
    <property type="resolution" value="1.55 A"/>
    <property type="chains" value="A=21-477"/>
</dbReference>
<dbReference type="PDB" id="2EX6">
    <property type="method" value="X-ray"/>
    <property type="resolution" value="1.60 A"/>
    <property type="chains" value="A=21-477"/>
</dbReference>
<dbReference type="PDB" id="2EX8">
    <property type="method" value="X-ray"/>
    <property type="resolution" value="1.60 A"/>
    <property type="chains" value="A=21-477"/>
</dbReference>
<dbReference type="PDB" id="2EX9">
    <property type="method" value="X-ray"/>
    <property type="resolution" value="1.65 A"/>
    <property type="chains" value="A=21-477"/>
</dbReference>
<dbReference type="PDB" id="2EXA">
    <property type="method" value="X-ray"/>
    <property type="resolution" value="1.70 A"/>
    <property type="chains" value="A=21-477"/>
</dbReference>
<dbReference type="PDB" id="2EXB">
    <property type="method" value="X-ray"/>
    <property type="resolution" value="1.75 A"/>
    <property type="chains" value="A=21-477"/>
</dbReference>
<dbReference type="PDBsum" id="2EX2"/>
<dbReference type="PDBsum" id="2EX6"/>
<dbReference type="PDBsum" id="2EX8"/>
<dbReference type="PDBsum" id="2EX9"/>
<dbReference type="PDBsum" id="2EXA"/>
<dbReference type="PDBsum" id="2EXB"/>
<dbReference type="SMR" id="P24228"/>
<dbReference type="BioGRID" id="4262437">
    <property type="interactions" value="334"/>
</dbReference>
<dbReference type="BioGRID" id="852006">
    <property type="interactions" value="1"/>
</dbReference>
<dbReference type="FunCoup" id="P24228">
    <property type="interactions" value="342"/>
</dbReference>
<dbReference type="IntAct" id="P24228">
    <property type="interactions" value="1"/>
</dbReference>
<dbReference type="STRING" id="511145.b3182"/>
<dbReference type="ChEMBL" id="CHEMBL2354204"/>
<dbReference type="DrugBank" id="DB01602">
    <property type="generic name" value="Bacampicillin"/>
</dbReference>
<dbReference type="DrugBank" id="DB00578">
    <property type="generic name" value="Carbenicillin"/>
</dbReference>
<dbReference type="DrugBank" id="DB09319">
    <property type="generic name" value="Carindacillin"/>
</dbReference>
<dbReference type="DrugBank" id="DB14879">
    <property type="generic name" value="Cefiderocol"/>
</dbReference>
<dbReference type="DrugBank" id="DB00671">
    <property type="generic name" value="Cefixime"/>
</dbReference>
<dbReference type="DrugBank" id="DB01328">
    <property type="generic name" value="Cefonicid"/>
</dbReference>
<dbReference type="DrugBank" id="DB01329">
    <property type="generic name" value="Cefoperazone"/>
</dbReference>
<dbReference type="DrugBank" id="DB01331">
    <property type="generic name" value="Cefoxitin"/>
</dbReference>
<dbReference type="DrugBank" id="DB06590">
    <property type="generic name" value="Ceftaroline fosamil"/>
</dbReference>
<dbReference type="DrugBank" id="DB09050">
    <property type="generic name" value="Ceftolozane"/>
</dbReference>
<dbReference type="DrugBank" id="DB01000">
    <property type="generic name" value="Cyclacillin"/>
</dbReference>
<dbReference type="DrugBank" id="DB00303">
    <property type="generic name" value="Ertapenem"/>
</dbReference>
<dbReference type="DrugBank" id="DB04570">
    <property type="generic name" value="Latamoxef"/>
</dbReference>
<dbReference type="DrugBank" id="DB00760">
    <property type="generic name" value="Meropenem"/>
</dbReference>
<dbReference type="DrugBank" id="DB00417">
    <property type="generic name" value="Phenoxymethylpenicillin"/>
</dbReference>
<dbReference type="DrugBank" id="DB09320">
    <property type="generic name" value="Procaine benzylpenicillin"/>
</dbReference>
<dbReference type="DrugBank" id="DB16335">
    <property type="generic name" value="Sulopenem etzadroxil"/>
</dbReference>
<dbReference type="DrugCentral" id="P24228"/>
<dbReference type="MEROPS" id="S13.001"/>
<dbReference type="MoonProt" id="P24228"/>
<dbReference type="jPOST" id="P24228"/>
<dbReference type="PaxDb" id="511145-b3182"/>
<dbReference type="EnsemblBacteria" id="AAC76214">
    <property type="protein sequence ID" value="AAC76214"/>
    <property type="gene ID" value="b3182"/>
</dbReference>
<dbReference type="GeneID" id="75173356"/>
<dbReference type="GeneID" id="947693"/>
<dbReference type="KEGG" id="ecj:JW3149"/>
<dbReference type="KEGG" id="eco:b3182"/>
<dbReference type="KEGG" id="ecoc:C3026_17325"/>
<dbReference type="PATRIC" id="fig|511145.12.peg.3275"/>
<dbReference type="EchoBASE" id="EB0198"/>
<dbReference type="eggNOG" id="COG2027">
    <property type="taxonomic scope" value="Bacteria"/>
</dbReference>
<dbReference type="HOGENOM" id="CLU_017692_1_1_6"/>
<dbReference type="InParanoid" id="P24228"/>
<dbReference type="OMA" id="DGTMRKR"/>
<dbReference type="OrthoDB" id="9802627at2"/>
<dbReference type="PhylomeDB" id="P24228"/>
<dbReference type="BioCyc" id="EcoCyc:EG10202-MONOMER"/>
<dbReference type="BioCyc" id="MetaCyc:EG10202-MONOMER"/>
<dbReference type="BRENDA" id="3.4.16.4">
    <property type="organism ID" value="2165"/>
</dbReference>
<dbReference type="BRENDA" id="3.4.17.14">
    <property type="organism ID" value="2026"/>
</dbReference>
<dbReference type="UniPathway" id="UPA00219"/>
<dbReference type="EvolutionaryTrace" id="P24228"/>
<dbReference type="PRO" id="PR:P24228"/>
<dbReference type="Proteomes" id="UP000000625">
    <property type="component" value="Chromosome"/>
</dbReference>
<dbReference type="GO" id="GO:0042597">
    <property type="term" value="C:periplasmic space"/>
    <property type="evidence" value="ECO:0000314"/>
    <property type="project" value="EcoCyc"/>
</dbReference>
<dbReference type="GO" id="GO:0005886">
    <property type="term" value="C:plasma membrane"/>
    <property type="evidence" value="ECO:0000314"/>
    <property type="project" value="EcoCyc"/>
</dbReference>
<dbReference type="GO" id="GO:0004180">
    <property type="term" value="F:carboxypeptidase activity"/>
    <property type="evidence" value="ECO:0000315"/>
    <property type="project" value="EcoCyc"/>
</dbReference>
<dbReference type="GO" id="GO:0004175">
    <property type="term" value="F:endopeptidase activity"/>
    <property type="evidence" value="ECO:0000314"/>
    <property type="project" value="EcoCyc"/>
</dbReference>
<dbReference type="GO" id="GO:0008658">
    <property type="term" value="F:penicillin binding"/>
    <property type="evidence" value="ECO:0000314"/>
    <property type="project" value="EcoCyc"/>
</dbReference>
<dbReference type="GO" id="GO:0004185">
    <property type="term" value="F:serine-type carboxypeptidase activity"/>
    <property type="evidence" value="ECO:0000255"/>
    <property type="project" value="EcoCyc"/>
</dbReference>
<dbReference type="GO" id="GO:0009002">
    <property type="term" value="F:serine-type D-Ala-D-Ala carboxypeptidase activity"/>
    <property type="evidence" value="ECO:0000315"/>
    <property type="project" value="EcoliWiki"/>
</dbReference>
<dbReference type="GO" id="GO:0004252">
    <property type="term" value="F:serine-type endopeptidase activity"/>
    <property type="evidence" value="ECO:0000255"/>
    <property type="project" value="EcoCyc"/>
</dbReference>
<dbReference type="GO" id="GO:0071555">
    <property type="term" value="P:cell wall organization"/>
    <property type="evidence" value="ECO:0007669"/>
    <property type="project" value="UniProtKB-KW"/>
</dbReference>
<dbReference type="GO" id="GO:0043093">
    <property type="term" value="P:FtsZ-dependent cytokinesis"/>
    <property type="evidence" value="ECO:0000316"/>
    <property type="project" value="EcoCyc"/>
</dbReference>
<dbReference type="GO" id="GO:0009252">
    <property type="term" value="P:peptidoglycan biosynthetic process"/>
    <property type="evidence" value="ECO:0007669"/>
    <property type="project" value="UniProtKB-UniPathway"/>
</dbReference>
<dbReference type="GO" id="GO:0000270">
    <property type="term" value="P:peptidoglycan metabolic process"/>
    <property type="evidence" value="ECO:0000315"/>
    <property type="project" value="EcoCyc"/>
</dbReference>
<dbReference type="GO" id="GO:0006508">
    <property type="term" value="P:proteolysis"/>
    <property type="evidence" value="ECO:0007669"/>
    <property type="project" value="InterPro"/>
</dbReference>
<dbReference type="GO" id="GO:0008360">
    <property type="term" value="P:regulation of cell shape"/>
    <property type="evidence" value="ECO:0007669"/>
    <property type="project" value="UniProtKB-KW"/>
</dbReference>
<dbReference type="GO" id="GO:0046677">
    <property type="term" value="P:response to antibiotic"/>
    <property type="evidence" value="ECO:0007669"/>
    <property type="project" value="UniProtKB-KW"/>
</dbReference>
<dbReference type="FunFam" id="3.40.710.10:FF:000018">
    <property type="entry name" value="D-alanyl-D-alanine carboxypeptidase dacB"/>
    <property type="match status" value="1"/>
</dbReference>
<dbReference type="FunFam" id="3.50.80.20:FF:000001">
    <property type="entry name" value="D-alanyl-D-alanine carboxypeptidase dacB"/>
    <property type="match status" value="1"/>
</dbReference>
<dbReference type="Gene3D" id="3.50.80.20">
    <property type="entry name" value="D-Ala-D-Ala carboxypeptidase C, peptidase S13"/>
    <property type="match status" value="1"/>
</dbReference>
<dbReference type="Gene3D" id="3.40.710.10">
    <property type="entry name" value="DD-peptidase/beta-lactamase superfamily"/>
    <property type="match status" value="1"/>
</dbReference>
<dbReference type="InterPro" id="IPR012338">
    <property type="entry name" value="Beta-lactam/transpept-like"/>
</dbReference>
<dbReference type="InterPro" id="IPR000667">
    <property type="entry name" value="Peptidase_S13"/>
</dbReference>
<dbReference type="NCBIfam" id="TIGR00666">
    <property type="entry name" value="PBP4"/>
    <property type="match status" value="1"/>
</dbReference>
<dbReference type="NCBIfam" id="NF008322">
    <property type="entry name" value="PRK11113.1"/>
    <property type="match status" value="1"/>
</dbReference>
<dbReference type="PANTHER" id="PTHR30023">
    <property type="entry name" value="D-ALANYL-D-ALANINE CARBOXYPEPTIDASE"/>
    <property type="match status" value="1"/>
</dbReference>
<dbReference type="PANTHER" id="PTHR30023:SF0">
    <property type="entry name" value="PENICILLIN-SENSITIVE CARBOXYPEPTIDASE A"/>
    <property type="match status" value="1"/>
</dbReference>
<dbReference type="Pfam" id="PF02113">
    <property type="entry name" value="Peptidase_S13"/>
    <property type="match status" value="1"/>
</dbReference>
<dbReference type="PRINTS" id="PR00922">
    <property type="entry name" value="DADACBPTASE3"/>
</dbReference>
<dbReference type="SUPFAM" id="SSF56601">
    <property type="entry name" value="beta-lactamase/transpeptidase-like"/>
    <property type="match status" value="1"/>
</dbReference>
<accession>P24228</accession>
<accession>Q2M930</accession>